<accession>A6VA75</accession>
<comment type="function">
    <text evidence="1">Catalyzes the hydrolysis of N(2)-succinylarginine into N(2)-succinylornithine, ammonia and CO(2).</text>
</comment>
<comment type="catalytic activity">
    <reaction evidence="1">
        <text>N(2)-succinyl-L-arginine + 2 H2O + 2 H(+) = N(2)-succinyl-L-ornithine + 2 NH4(+) + CO2</text>
        <dbReference type="Rhea" id="RHEA:19533"/>
        <dbReference type="ChEBI" id="CHEBI:15377"/>
        <dbReference type="ChEBI" id="CHEBI:15378"/>
        <dbReference type="ChEBI" id="CHEBI:16526"/>
        <dbReference type="ChEBI" id="CHEBI:28938"/>
        <dbReference type="ChEBI" id="CHEBI:58241"/>
        <dbReference type="ChEBI" id="CHEBI:58514"/>
        <dbReference type="EC" id="3.5.3.23"/>
    </reaction>
</comment>
<comment type="pathway">
    <text evidence="1">Amino-acid degradation; L-arginine degradation via AST pathway; L-glutamate and succinate from L-arginine: step 2/5.</text>
</comment>
<comment type="subunit">
    <text evidence="1">Homodimer.</text>
</comment>
<comment type="similarity">
    <text evidence="1">Belongs to the succinylarginine dihydrolase family.</text>
</comment>
<evidence type="ECO:0000255" key="1">
    <source>
        <dbReference type="HAMAP-Rule" id="MF_01172"/>
    </source>
</evidence>
<dbReference type="EC" id="3.5.3.23" evidence="1"/>
<dbReference type="EMBL" id="CP000744">
    <property type="protein sequence ID" value="ABR81096.1"/>
    <property type="molecule type" value="Genomic_DNA"/>
</dbReference>
<dbReference type="RefSeq" id="WP_012076937.1">
    <property type="nucleotide sequence ID" value="NC_009656.1"/>
</dbReference>
<dbReference type="SMR" id="A6VA75"/>
<dbReference type="GeneID" id="77222535"/>
<dbReference type="KEGG" id="pap:PSPA7_4616"/>
<dbReference type="HOGENOM" id="CLU_053835_0_0_6"/>
<dbReference type="UniPathway" id="UPA00185">
    <property type="reaction ID" value="UER00280"/>
</dbReference>
<dbReference type="Proteomes" id="UP000001582">
    <property type="component" value="Chromosome"/>
</dbReference>
<dbReference type="GO" id="GO:0009015">
    <property type="term" value="F:N-succinylarginine dihydrolase activity"/>
    <property type="evidence" value="ECO:0007669"/>
    <property type="project" value="UniProtKB-UniRule"/>
</dbReference>
<dbReference type="GO" id="GO:0019544">
    <property type="term" value="P:arginine catabolic process to glutamate"/>
    <property type="evidence" value="ECO:0007669"/>
    <property type="project" value="UniProtKB-UniRule"/>
</dbReference>
<dbReference type="GO" id="GO:0019545">
    <property type="term" value="P:arginine catabolic process to succinate"/>
    <property type="evidence" value="ECO:0007669"/>
    <property type="project" value="UniProtKB-UniRule"/>
</dbReference>
<dbReference type="FunFam" id="3.75.10.20:FF:000001">
    <property type="entry name" value="N-succinylarginine dihydrolase"/>
    <property type="match status" value="1"/>
</dbReference>
<dbReference type="Gene3D" id="3.75.10.20">
    <property type="entry name" value="Succinylarginine dihydrolase"/>
    <property type="match status" value="1"/>
</dbReference>
<dbReference type="HAMAP" id="MF_01172">
    <property type="entry name" value="AstB"/>
    <property type="match status" value="1"/>
</dbReference>
<dbReference type="InterPro" id="IPR037031">
    <property type="entry name" value="AstB_sf"/>
</dbReference>
<dbReference type="InterPro" id="IPR007079">
    <property type="entry name" value="SuccinylArg_d-Hdrlase_AstB"/>
</dbReference>
<dbReference type="NCBIfam" id="TIGR03241">
    <property type="entry name" value="arg_catab_astB"/>
    <property type="match status" value="1"/>
</dbReference>
<dbReference type="NCBIfam" id="NF009789">
    <property type="entry name" value="PRK13281.1"/>
    <property type="match status" value="1"/>
</dbReference>
<dbReference type="PANTHER" id="PTHR30420">
    <property type="entry name" value="N-SUCCINYLARGININE DIHYDROLASE"/>
    <property type="match status" value="1"/>
</dbReference>
<dbReference type="PANTHER" id="PTHR30420:SF2">
    <property type="entry name" value="N-SUCCINYLARGININE DIHYDROLASE"/>
    <property type="match status" value="1"/>
</dbReference>
<dbReference type="Pfam" id="PF04996">
    <property type="entry name" value="AstB"/>
    <property type="match status" value="1"/>
</dbReference>
<dbReference type="SUPFAM" id="SSF55909">
    <property type="entry name" value="Pentein"/>
    <property type="match status" value="1"/>
</dbReference>
<name>ASTB_PSEP7</name>
<sequence>MNAHEVNFDGLVGPTHNYGGLSYGNVASQSNSQALSNPKEAAKQGLAKMKALMELGFKQGVLAPQARPDTAALRSLGFSGSDEEVIRRAAKEAMPLLAACSSASSMWTANAATVSPSADTADGRVHFTAANLNCKFHRSIEHPTTSRVLAAMFNDERHFAHHAALPAVSQFGDEGAANHTRFCKDYGDAGVEFFVFGRSAFDSRFPAPQRYPARQTLEACQAVARLHGLSEAGVVYAQQNPAVIDQGVFHNDVISVGNGEVLFHHEDAFLDTEKVLAELHDKLGRRGGRFRAICVPREQVAVEDAVKSYLFNSQLLSKADGSMLLVVPEECRNNPRVWNYLERLTGDDGPIREVKVFDLKQSMQNGGGPACLRLRVALKEQELAAVNPGVIMTAGLYDTLVAWVDRHYRDRLGEADLADPQLLQECRTALDELTQILKLGSVYSFQLD</sequence>
<keyword id="KW-0056">Arginine metabolism</keyword>
<keyword id="KW-0378">Hydrolase</keyword>
<reference key="1">
    <citation type="submission" date="2007-06" db="EMBL/GenBank/DDBJ databases">
        <authorList>
            <person name="Dodson R.J."/>
            <person name="Harkins D."/>
            <person name="Paulsen I.T."/>
        </authorList>
    </citation>
    <scope>NUCLEOTIDE SEQUENCE [LARGE SCALE GENOMIC DNA]</scope>
    <source>
        <strain>DSM 24068 / PA7</strain>
    </source>
</reference>
<protein>
    <recommendedName>
        <fullName evidence="1">N-succinylarginine dihydrolase</fullName>
        <ecNumber evidence="1">3.5.3.23</ecNumber>
    </recommendedName>
</protein>
<feature type="chain" id="PRO_1000065729" description="N-succinylarginine dihydrolase">
    <location>
        <begin position="1"/>
        <end position="448"/>
    </location>
</feature>
<feature type="active site" evidence="1">
    <location>
        <position position="174"/>
    </location>
</feature>
<feature type="active site" evidence="1">
    <location>
        <position position="250"/>
    </location>
</feature>
<feature type="active site" description="Nucleophile" evidence="1">
    <location>
        <position position="371"/>
    </location>
</feature>
<feature type="binding site" evidence="1">
    <location>
        <begin position="19"/>
        <end position="28"/>
    </location>
    <ligand>
        <name>substrate</name>
    </ligand>
</feature>
<feature type="binding site" evidence="1">
    <location>
        <position position="110"/>
    </location>
    <ligand>
        <name>substrate</name>
    </ligand>
</feature>
<feature type="binding site" evidence="1">
    <location>
        <begin position="137"/>
        <end position="138"/>
    </location>
    <ligand>
        <name>substrate</name>
    </ligand>
</feature>
<feature type="binding site" evidence="1">
    <location>
        <position position="214"/>
    </location>
    <ligand>
        <name>substrate</name>
    </ligand>
</feature>
<feature type="binding site" evidence="1">
    <location>
        <position position="252"/>
    </location>
    <ligand>
        <name>substrate</name>
    </ligand>
</feature>
<feature type="binding site" evidence="1">
    <location>
        <position position="365"/>
    </location>
    <ligand>
        <name>substrate</name>
    </ligand>
</feature>
<gene>
    <name evidence="1" type="primary">astB</name>
    <name type="ordered locus">PSPA7_4616</name>
</gene>
<proteinExistence type="inferred from homology"/>
<organism>
    <name type="scientific">Pseudomonas paraeruginosa (strain DSM 24068 / PA7)</name>
    <name type="common">Pseudomonas aeruginosa (strain PA7)</name>
    <dbReference type="NCBI Taxonomy" id="381754"/>
    <lineage>
        <taxon>Bacteria</taxon>
        <taxon>Pseudomonadati</taxon>
        <taxon>Pseudomonadota</taxon>
        <taxon>Gammaproteobacteria</taxon>
        <taxon>Pseudomonadales</taxon>
        <taxon>Pseudomonadaceae</taxon>
        <taxon>Pseudomonas</taxon>
        <taxon>Pseudomonas paraeruginosa</taxon>
    </lineage>
</organism>